<sequence>VFNSERPRFVIVKPRYLKGMVVNGDSWPDHFIEDANVFTKNPDK</sequence>
<organism>
    <name type="scientific">Pseudotsuga menziesii</name>
    <name type="common">Douglas-fir</name>
    <name type="synonym">Abies menziesii</name>
    <dbReference type="NCBI Taxonomy" id="3357"/>
    <lineage>
        <taxon>Eukaryota</taxon>
        <taxon>Viridiplantae</taxon>
        <taxon>Streptophyta</taxon>
        <taxon>Embryophyta</taxon>
        <taxon>Tracheophyta</taxon>
        <taxon>Spermatophyta</taxon>
        <taxon>Pinopsida</taxon>
        <taxon>Pinidae</taxon>
        <taxon>Conifers I</taxon>
        <taxon>Pinales</taxon>
        <taxon>Pinaceae</taxon>
        <taxon>Pseudotsuga</taxon>
    </lineage>
</organism>
<name>UP09_PSEMZ</name>
<proteinExistence type="evidence at protein level"/>
<reference key="1">
    <citation type="journal article" date="2008" name="J. Proteomics">
        <title>A proteomics approach to identify proteins differentially expressed in Douglas-fir seedlings infected by Phellinus sulphurascens.</title>
        <authorList>
            <person name="Islam M.A."/>
            <person name="Sturrock R.N."/>
            <person name="Ekramoddoullah A.K.M."/>
        </authorList>
    </citation>
    <scope>IDENTIFICATION BY MASS SPECTROMETRY</scope>
</reference>
<feature type="chain" id="PRO_0000347296" description="Unknown protein 9">
    <location>
        <begin position="1" status="less than"/>
        <end position="44" status="greater than"/>
    </location>
</feature>
<feature type="non-terminal residue" evidence="1">
    <location>
        <position position="1"/>
    </location>
</feature>
<feature type="non-terminal residue" evidence="1">
    <location>
        <position position="44"/>
    </location>
</feature>
<accession>P85902</accession>
<evidence type="ECO:0000303" key="1">
    <source>
    </source>
</evidence>
<protein>
    <recommendedName>
        <fullName>Unknown protein 9</fullName>
    </recommendedName>
</protein>